<sequence>DKDTYKVSGGLHGVGVSCVNALSSLLVATVHREGKVFQQKYSTGNPQGAVEVVGQSDRTGTTIYFEPDATIFATTEYKYETVSKRLRELSYLNKGIRLTLTDLRETDEQGRHLYEEFFSEGGLKEFVEHLDSTRQPLLPAPIHVEKTDGDIPVEVALIYNNSYSENVFSYVNNINTHEGGTHVSGFRRALTRTLKSYADKSGMLEKAKVEITGDDFREGLTAVISIKVAEPQFEGQTKTKLGNSDAIGAVDNAVSEILGYYLEENPREAKLIIQKVILAAQARQAARKAREMVQRKNVMGGTSLPGKLADCSDTNPERCELYLVEGDSAGGSAKQGRDRSFQAILPLRGKILNVEKAQEYKIYDNEEIKNMITAMGVTFGTEEDSKALNLTKLRYHKIIIMTDADVDGSHIRTLILTFFFRYMRELIEQGYLYVALPPLYIVKKGKEERYAWSDAERDAIIREIAPEGKEDSVGIQRY</sequence>
<comment type="function">
    <text evidence="1">A type II topoisomerase that negatively supercoils closed circular double-stranded (ds) DNA in an ATP-dependent manner to modulate DNA topology and maintain chromosomes in an underwound state. Negative supercoiling favors strand separation, and DNA replication, transcription, recombination and repair, all of which involve strand separation. Also able to catalyze the interconversion of other topological isomers of dsDNA rings, including catenanes and knotted rings. Type II topoisomerases break and join 2 DNA strands simultaneously in an ATP-dependent manner.</text>
</comment>
<comment type="catalytic activity">
    <reaction evidence="2">
        <text>ATP-dependent breakage, passage and rejoining of double-stranded DNA.</text>
        <dbReference type="EC" id="5.6.2.2"/>
    </reaction>
</comment>
<comment type="cofactor">
    <cofactor evidence="2">
        <name>Mg(2+)</name>
        <dbReference type="ChEBI" id="CHEBI:18420"/>
    </cofactor>
    <cofactor evidence="2">
        <name>Mn(2+)</name>
        <dbReference type="ChEBI" id="CHEBI:29035"/>
    </cofactor>
    <cofactor evidence="2">
        <name>Ca(2+)</name>
        <dbReference type="ChEBI" id="CHEBI:29108"/>
    </cofactor>
    <text evidence="2">Binds two Mg(2+) per subunit. The magnesium ions form salt bridges with both the protein and the DNA. Can also accept other divalent metal cations, such as Mn(2+) or Ca(2+).</text>
</comment>
<comment type="subunit">
    <text evidence="1">Heterotetramer, composed of two GyrA and two GyrB chains. In the heterotetramer, GyrA contains the active site tyrosine that forms a transient covalent intermediate with DNA, while GyrB binds cofactors and catalyzes ATP hydrolysis.</text>
</comment>
<comment type="subcellular location">
    <subcellularLocation>
        <location evidence="1">Cytoplasm</location>
    </subcellularLocation>
</comment>
<comment type="miscellaneous">
    <text evidence="1">Few gyrases are as efficient as E.coli at forming negative supercoils. Not all organisms have 2 type II topoisomerases; in organisms with a single type II topoisomerase this enzyme also has to decatenate newly replicated chromosomes.</text>
</comment>
<comment type="similarity">
    <text evidence="3">Belongs to the type II topoisomerase GyrB family.</text>
</comment>
<accession>Q9FAX1</accession>
<gene>
    <name type="primary">gyrB</name>
</gene>
<dbReference type="EC" id="5.6.2.2" evidence="2"/>
<dbReference type="EMBL" id="AB032580">
    <property type="protein sequence ID" value="BAB13318.1"/>
    <property type="molecule type" value="Genomic_DNA"/>
</dbReference>
<dbReference type="SMR" id="Q9FAX1"/>
<dbReference type="GO" id="GO:0005737">
    <property type="term" value="C:cytoplasm"/>
    <property type="evidence" value="ECO:0007669"/>
    <property type="project" value="UniProtKB-SubCell"/>
</dbReference>
<dbReference type="GO" id="GO:0005524">
    <property type="term" value="F:ATP binding"/>
    <property type="evidence" value="ECO:0007669"/>
    <property type="project" value="UniProtKB-KW"/>
</dbReference>
<dbReference type="GO" id="GO:0003677">
    <property type="term" value="F:DNA binding"/>
    <property type="evidence" value="ECO:0007669"/>
    <property type="project" value="UniProtKB-KW"/>
</dbReference>
<dbReference type="GO" id="GO:0003918">
    <property type="term" value="F:DNA topoisomerase type II (double strand cut, ATP-hydrolyzing) activity"/>
    <property type="evidence" value="ECO:0007669"/>
    <property type="project" value="UniProtKB-EC"/>
</dbReference>
<dbReference type="GO" id="GO:0046872">
    <property type="term" value="F:metal ion binding"/>
    <property type="evidence" value="ECO:0007669"/>
    <property type="project" value="UniProtKB-KW"/>
</dbReference>
<dbReference type="GO" id="GO:0006265">
    <property type="term" value="P:DNA topological change"/>
    <property type="evidence" value="ECO:0007669"/>
    <property type="project" value="InterPro"/>
</dbReference>
<dbReference type="CDD" id="cd00822">
    <property type="entry name" value="TopoII_Trans_DNA_gyrase"/>
    <property type="match status" value="1"/>
</dbReference>
<dbReference type="CDD" id="cd03366">
    <property type="entry name" value="TOPRIM_TopoIIA_GyrB"/>
    <property type="match status" value="1"/>
</dbReference>
<dbReference type="FunFam" id="3.30.230.10:FF:000005">
    <property type="entry name" value="DNA gyrase subunit B"/>
    <property type="match status" value="1"/>
</dbReference>
<dbReference type="FunFam" id="3.40.50.670:FF:000001">
    <property type="entry name" value="DNA topoisomerase 2"/>
    <property type="match status" value="1"/>
</dbReference>
<dbReference type="Gene3D" id="3.30.230.10">
    <property type="match status" value="1"/>
</dbReference>
<dbReference type="Gene3D" id="3.40.50.670">
    <property type="match status" value="1"/>
</dbReference>
<dbReference type="Gene3D" id="3.30.565.10">
    <property type="entry name" value="Histidine kinase-like ATPase, C-terminal domain"/>
    <property type="match status" value="1"/>
</dbReference>
<dbReference type="InterPro" id="IPR036890">
    <property type="entry name" value="HATPase_C_sf"/>
</dbReference>
<dbReference type="InterPro" id="IPR020568">
    <property type="entry name" value="Ribosomal_Su5_D2-typ_SF"/>
</dbReference>
<dbReference type="InterPro" id="IPR014721">
    <property type="entry name" value="Ribsml_uS5_D2-typ_fold_subgr"/>
</dbReference>
<dbReference type="InterPro" id="IPR001241">
    <property type="entry name" value="Topo_IIA"/>
</dbReference>
<dbReference type="InterPro" id="IPR013760">
    <property type="entry name" value="Topo_IIA-like_dom_sf"/>
</dbReference>
<dbReference type="InterPro" id="IPR000565">
    <property type="entry name" value="Topo_IIA_B"/>
</dbReference>
<dbReference type="InterPro" id="IPR013759">
    <property type="entry name" value="Topo_IIA_B_C"/>
</dbReference>
<dbReference type="InterPro" id="IPR013506">
    <property type="entry name" value="Topo_IIA_bsu_dom2"/>
</dbReference>
<dbReference type="InterPro" id="IPR018522">
    <property type="entry name" value="TopoIIA_CS"/>
</dbReference>
<dbReference type="InterPro" id="IPR006171">
    <property type="entry name" value="TOPRIM_dom"/>
</dbReference>
<dbReference type="InterPro" id="IPR034160">
    <property type="entry name" value="TOPRIM_GyrB"/>
</dbReference>
<dbReference type="PANTHER" id="PTHR45866:SF1">
    <property type="entry name" value="DNA GYRASE SUBUNIT B, MITOCHONDRIAL"/>
    <property type="match status" value="1"/>
</dbReference>
<dbReference type="PANTHER" id="PTHR45866">
    <property type="entry name" value="DNA GYRASE/TOPOISOMERASE SUBUNIT B"/>
    <property type="match status" value="1"/>
</dbReference>
<dbReference type="Pfam" id="PF00204">
    <property type="entry name" value="DNA_gyraseB"/>
    <property type="match status" value="1"/>
</dbReference>
<dbReference type="Pfam" id="PF01751">
    <property type="entry name" value="Toprim"/>
    <property type="match status" value="1"/>
</dbReference>
<dbReference type="PRINTS" id="PR01159">
    <property type="entry name" value="DNAGYRASEB"/>
</dbReference>
<dbReference type="PRINTS" id="PR00418">
    <property type="entry name" value="TPI2FAMILY"/>
</dbReference>
<dbReference type="SMART" id="SM00433">
    <property type="entry name" value="TOP2c"/>
    <property type="match status" value="1"/>
</dbReference>
<dbReference type="SUPFAM" id="SSF55874">
    <property type="entry name" value="ATPase domain of HSP90 chaperone/DNA topoisomerase II/histidine kinase"/>
    <property type="match status" value="1"/>
</dbReference>
<dbReference type="SUPFAM" id="SSF54211">
    <property type="entry name" value="Ribosomal protein S5 domain 2-like"/>
    <property type="match status" value="1"/>
</dbReference>
<dbReference type="SUPFAM" id="SSF56719">
    <property type="entry name" value="Type II DNA topoisomerase"/>
    <property type="match status" value="1"/>
</dbReference>
<dbReference type="PROSITE" id="PS00177">
    <property type="entry name" value="TOPOISOMERASE_II"/>
    <property type="match status" value="1"/>
</dbReference>
<dbReference type="PROSITE" id="PS50880">
    <property type="entry name" value="TOPRIM"/>
    <property type="match status" value="1"/>
</dbReference>
<evidence type="ECO:0000250" key="1">
    <source>
        <dbReference type="UniProtKB" id="P0AES6"/>
    </source>
</evidence>
<evidence type="ECO:0000255" key="2">
    <source>
        <dbReference type="PROSITE-ProRule" id="PRU00995"/>
    </source>
</evidence>
<evidence type="ECO:0000305" key="3"/>
<name>GYRB_EISEL</name>
<reference key="1">
    <citation type="submission" date="1999-09" db="EMBL/GenBank/DDBJ databases">
        <title>Phylogenetic analysis and taxonomic study of marine Cytophaga like bacteria. Proposal of Haerentibaculum gen. nov. with Haerentibaculum maritimum comb. nov. and Haerentibaculum ovolyticus comb. nov., and two new species.</title>
        <authorList>
            <person name="Suzuki M."/>
            <person name="Yamaguchi K."/>
        </authorList>
    </citation>
    <scope>NUCLEOTIDE SEQUENCE [GENOMIC DNA]</scope>
    <source>
        <strain>ATCC 23112 / DSM 3317 / JCM 21159 / LMG 10750 / NBRC 15055 / NCIMB 1385 / LMG 10750 / NZ-1 / Fx a2</strain>
    </source>
</reference>
<feature type="chain" id="PRO_0000145311" description="DNA gyrase subunit B">
    <location>
        <begin position="1" status="less than"/>
        <end position="478" status="greater than"/>
    </location>
</feature>
<feature type="domain" description="Toprim" evidence="2">
    <location>
        <begin position="319"/>
        <end position="438"/>
    </location>
</feature>
<feature type="binding site" evidence="2">
    <location>
        <position position="325"/>
    </location>
    <ligand>
        <name>Mg(2+)</name>
        <dbReference type="ChEBI" id="CHEBI:18420"/>
        <label>1</label>
        <note>catalytic</note>
    </ligand>
</feature>
<feature type="binding site" evidence="2">
    <location>
        <position position="403"/>
    </location>
    <ligand>
        <name>Mg(2+)</name>
        <dbReference type="ChEBI" id="CHEBI:18420"/>
        <label>1</label>
        <note>catalytic</note>
    </ligand>
</feature>
<feature type="binding site" evidence="2">
    <location>
        <position position="403"/>
    </location>
    <ligand>
        <name>Mg(2+)</name>
        <dbReference type="ChEBI" id="CHEBI:18420"/>
        <label>2</label>
    </ligand>
</feature>
<feature type="binding site" evidence="2">
    <location>
        <position position="405"/>
    </location>
    <ligand>
        <name>Mg(2+)</name>
        <dbReference type="ChEBI" id="CHEBI:18420"/>
        <label>2</label>
    </ligand>
</feature>
<feature type="site" description="Interaction with DNA" evidence="2">
    <location>
        <position position="350"/>
    </location>
</feature>
<feature type="site" description="Interaction with DNA" evidence="2">
    <location>
        <position position="353"/>
    </location>
</feature>
<feature type="non-terminal residue">
    <location>
        <position position="1"/>
    </location>
</feature>
<feature type="non-terminal residue">
    <location>
        <position position="478"/>
    </location>
</feature>
<keyword id="KW-0067">ATP-binding</keyword>
<keyword id="KW-0963">Cytoplasm</keyword>
<keyword id="KW-0238">DNA-binding</keyword>
<keyword id="KW-0413">Isomerase</keyword>
<keyword id="KW-0460">Magnesium</keyword>
<keyword id="KW-0479">Metal-binding</keyword>
<keyword id="KW-0547">Nucleotide-binding</keyword>
<keyword id="KW-0799">Topoisomerase</keyword>
<organism>
    <name type="scientific">Eisenibacter elegans</name>
    <name type="common">Flexibacter elegans</name>
    <dbReference type="NCBI Taxonomy" id="997"/>
    <lineage>
        <taxon>Bacteria</taxon>
        <taxon>Pseudomonadati</taxon>
        <taxon>Bacteroidota</taxon>
        <taxon>Cytophagia</taxon>
        <taxon>Cytophagales</taxon>
        <taxon>Microscillaceae</taxon>
        <taxon>Eisenibacter</taxon>
    </lineage>
</organism>
<protein>
    <recommendedName>
        <fullName>DNA gyrase subunit B</fullName>
        <ecNumber evidence="2">5.6.2.2</ecNumber>
    </recommendedName>
</protein>
<proteinExistence type="inferred from homology"/>